<gene>
    <name type="ordered locus">BA71V-005</name>
    <name type="ORF">KP177R</name>
</gene>
<comment type="subcellular location">
    <subcellularLocation>
        <location evidence="6">Virion membrane</location>
        <topology evidence="1">Single-pass membrane protein</topology>
    </subcellularLocation>
    <subcellularLocation>
        <location evidence="2">Host cell membrane</location>
        <topology evidence="1">Single-pass membrane protein</topology>
    </subcellularLocation>
    <text evidence="3">Part of the virion inner membrane.</text>
</comment>
<comment type="induction">
    <text evidence="4">Expressed in the late phase of the viral replicative cycle.</text>
</comment>
<comment type="similarity">
    <text evidence="5">Belongs to the asfivirus inner membrane protein p22 family.</text>
</comment>
<name>P22_ASFB7</name>
<accession>P23169</accession>
<sequence>MFNIKMTISTLLIALIILVIIILVVFLYYKKQQPPKKVCKVDKDCGSGEHCVRGTCSTLSCLDAVKMDKRNIKIDSKISSCEFTPNFYRFTDTAADEQQEFGKTRHPIKITPSPSESHSPQEVCEKYCSWGTDDCTGWEYVGDEKEGTCYVYNNPHHPVLKYGKDHIIALPRNHKHA</sequence>
<dbReference type="EMBL" id="U18466">
    <property type="protein sequence ID" value="AAA65240.1"/>
    <property type="molecule type" value="Genomic_DNA"/>
</dbReference>
<dbReference type="EMBL" id="M57546">
    <property type="protein sequence ID" value="AAA42681.1"/>
    <property type="molecule type" value="Genomic_DNA"/>
</dbReference>
<dbReference type="RefSeq" id="NP_042704.1">
    <property type="nucleotide sequence ID" value="NC_001659.2"/>
</dbReference>
<dbReference type="SMR" id="P23169"/>
<dbReference type="GeneID" id="22220394"/>
<dbReference type="KEGG" id="vg:22220394"/>
<dbReference type="Proteomes" id="UP000000624">
    <property type="component" value="Segment"/>
</dbReference>
<dbReference type="GO" id="GO:0020002">
    <property type="term" value="C:host cell plasma membrane"/>
    <property type="evidence" value="ECO:0007669"/>
    <property type="project" value="UniProtKB-SubCell"/>
</dbReference>
<dbReference type="GO" id="GO:0016020">
    <property type="term" value="C:membrane"/>
    <property type="evidence" value="ECO:0007669"/>
    <property type="project" value="UniProtKB-KW"/>
</dbReference>
<dbReference type="GO" id="GO:0055036">
    <property type="term" value="C:virion membrane"/>
    <property type="evidence" value="ECO:0007669"/>
    <property type="project" value="UniProtKB-SubCell"/>
</dbReference>
<organismHost>
    <name type="scientific">Ornithodoros</name>
    <name type="common">relapsing fever ticks</name>
    <dbReference type="NCBI Taxonomy" id="6937"/>
</organismHost>
<organismHost>
    <name type="scientific">Sus scrofa</name>
    <name type="common">Pig</name>
    <dbReference type="NCBI Taxonomy" id="9823"/>
</organismHost>
<proteinExistence type="evidence at transcript level"/>
<reference key="1">
    <citation type="journal article" date="1990" name="J. Virol.">
        <title>Multigene families in African swine fever virus: family 360.</title>
        <authorList>
            <person name="Gonzalez A."/>
            <person name="Calvo V."/>
            <person name="Almazan F."/>
            <person name="Almendral J.M."/>
            <person name="Ramirez J.C."/>
            <person name="de la Vega I."/>
            <person name="Blasco R."/>
            <person name="Vinuela E."/>
        </authorList>
    </citation>
    <scope>NUCLEOTIDE SEQUENCE [GENOMIC DNA]</scope>
</reference>
<reference key="2">
    <citation type="journal article" date="1991" name="Virology">
        <title>Protein p22 of African swine fever virus: an early structural protein that is incorporated into the membrane of infected cells.</title>
        <authorList>
            <person name="Camacho A."/>
            <person name="Vinuela E."/>
        </authorList>
    </citation>
    <scope>SUBCELLULAR LOCATION</scope>
</reference>
<reference key="3">
    <citation type="journal article" date="2018" name="J. Virol.">
        <title>A Proteomic Atlas of the African Swine Fever Virus Particle.</title>
        <authorList>
            <person name="Alejo A."/>
            <person name="Matamoros T."/>
            <person name="Guerra M."/>
            <person name="Andres G."/>
        </authorList>
    </citation>
    <scope>SUBCELLULAR LOCATION</scope>
</reference>
<reference key="4">
    <citation type="journal article" date="2020" name="J. Virol.">
        <title>The African Swine Fever Virus Transcriptome.</title>
        <authorList>
            <person name="Cackett G."/>
            <person name="Matelska D."/>
            <person name="Sykora M."/>
            <person name="Portugal R."/>
            <person name="Malecki M."/>
            <person name="Baehler J."/>
            <person name="Dixon L."/>
            <person name="Werner F."/>
        </authorList>
    </citation>
    <scope>INDUCTION</scope>
</reference>
<evidence type="ECO:0000255" key="1"/>
<evidence type="ECO:0000269" key="2">
    <source>
    </source>
</evidence>
<evidence type="ECO:0000269" key="3">
    <source>
    </source>
</evidence>
<evidence type="ECO:0000269" key="4">
    <source>
    </source>
</evidence>
<evidence type="ECO:0000305" key="5"/>
<evidence type="ECO:0000305" key="6">
    <source>
    </source>
</evidence>
<protein>
    <recommendedName>
        <fullName>Inner membrane protein p22</fullName>
    </recommendedName>
</protein>
<feature type="chain" id="PRO_0000036742" description="Inner membrane protein p22">
    <location>
        <begin position="1"/>
        <end position="177"/>
    </location>
</feature>
<feature type="topological domain" description="Intravirion" evidence="1">
    <location>
        <begin position="1"/>
        <end position="7"/>
    </location>
</feature>
<feature type="transmembrane region" description="Helical" evidence="1">
    <location>
        <begin position="8"/>
        <end position="28"/>
    </location>
</feature>
<feature type="topological domain" description="Virion surface" evidence="1">
    <location>
        <begin position="29"/>
        <end position="177"/>
    </location>
</feature>
<keyword id="KW-1032">Host cell membrane</keyword>
<keyword id="KW-1043">Host membrane</keyword>
<keyword id="KW-0426">Late protein</keyword>
<keyword id="KW-0472">Membrane</keyword>
<keyword id="KW-1185">Reference proteome</keyword>
<keyword id="KW-0812">Transmembrane</keyword>
<keyword id="KW-1133">Transmembrane helix</keyword>
<keyword id="KW-0946">Virion</keyword>
<organism>
    <name type="scientific">African swine fever virus (strain Badajoz 1971 Vero-adapted)</name>
    <name type="common">Ba71V</name>
    <name type="synonym">ASFV</name>
    <dbReference type="NCBI Taxonomy" id="10498"/>
    <lineage>
        <taxon>Viruses</taxon>
        <taxon>Varidnaviria</taxon>
        <taxon>Bamfordvirae</taxon>
        <taxon>Nucleocytoviricota</taxon>
        <taxon>Pokkesviricetes</taxon>
        <taxon>Asfuvirales</taxon>
        <taxon>Asfarviridae</taxon>
        <taxon>Asfivirus</taxon>
        <taxon>African swine fever virus</taxon>
    </lineage>
</organism>